<feature type="chain" id="PRO_0000362142" description="Poly(A) ribonuclease pop2">
    <location>
        <begin position="1"/>
        <end position="335"/>
    </location>
</feature>
<feature type="region of interest" description="Disordered" evidence="1">
    <location>
        <begin position="292"/>
        <end position="325"/>
    </location>
</feature>
<feature type="compositionally biased region" description="Polar residues" evidence="1">
    <location>
        <begin position="305"/>
        <end position="325"/>
    </location>
</feature>
<feature type="binding site">
    <location>
        <position position="53"/>
    </location>
    <ligand>
        <name>Mg(2+)</name>
        <dbReference type="ChEBI" id="CHEBI:18420"/>
        <note>catalytic</note>
    </ligand>
</feature>
<feature type="binding site" evidence="5">
    <location>
        <position position="53"/>
    </location>
    <ligand>
        <name>Zn(2+)</name>
        <dbReference type="ChEBI" id="CHEBI:29105"/>
        <note>catalytic</note>
    </ligand>
</feature>
<feature type="binding site">
    <location>
        <position position="55"/>
    </location>
    <ligand>
        <name>Mg(2+)</name>
        <dbReference type="ChEBI" id="CHEBI:18420"/>
        <note>catalytic</note>
    </ligand>
</feature>
<feature type="binding site" evidence="5">
    <location>
        <position position="55"/>
    </location>
    <ligand>
        <name>Zn(2+)</name>
        <dbReference type="ChEBI" id="CHEBI:29105"/>
        <note>catalytic</note>
    </ligand>
</feature>
<feature type="binding site">
    <location>
        <position position="174"/>
    </location>
    <ligand>
        <name>Mg(2+)</name>
        <dbReference type="ChEBI" id="CHEBI:18420"/>
        <note>catalytic</note>
    </ligand>
</feature>
<feature type="binding site">
    <location>
        <position position="243"/>
    </location>
    <ligand>
        <name>Mg(2+)</name>
        <dbReference type="ChEBI" id="CHEBI:18420"/>
        <note>catalytic</note>
    </ligand>
</feature>
<feature type="binding site" evidence="5">
    <location>
        <position position="243"/>
    </location>
    <ligand>
        <name>Zn(2+)</name>
        <dbReference type="ChEBI" id="CHEBI:29105"/>
        <note>catalytic</note>
    </ligand>
</feature>
<feature type="modified residue" description="Phosphoserine" evidence="4">
    <location>
        <position position="302"/>
    </location>
</feature>
<feature type="modified residue" description="Phosphothreonine" evidence="4">
    <location>
        <position position="304"/>
    </location>
</feature>
<feature type="modified residue" description="Phosphoserine" evidence="4">
    <location>
        <position position="306"/>
    </location>
</feature>
<feature type="mutagenesis site" description="No nuclease activity." evidence="3">
    <original>D</original>
    <variation>A</variation>
    <location>
        <position position="53"/>
    </location>
</feature>
<feature type="strand" evidence="7">
    <location>
        <begin position="24"/>
        <end position="28"/>
    </location>
</feature>
<feature type="turn" evidence="7">
    <location>
        <begin position="30"/>
        <end position="32"/>
    </location>
</feature>
<feature type="helix" evidence="7">
    <location>
        <begin position="33"/>
        <end position="43"/>
    </location>
</feature>
<feature type="turn" evidence="7">
    <location>
        <begin position="44"/>
        <end position="46"/>
    </location>
</feature>
<feature type="strand" evidence="7">
    <location>
        <begin position="49"/>
        <end position="55"/>
    </location>
</feature>
<feature type="strand" evidence="7">
    <location>
        <begin position="68"/>
        <end position="70"/>
    </location>
</feature>
<feature type="helix" evidence="7">
    <location>
        <begin position="71"/>
        <end position="84"/>
    </location>
</feature>
<feature type="strand" evidence="7">
    <location>
        <begin position="89"/>
        <end position="95"/>
    </location>
</feature>
<feature type="strand" evidence="7">
    <location>
        <begin position="106"/>
        <end position="112"/>
    </location>
</feature>
<feature type="turn" evidence="7">
    <location>
        <begin position="116"/>
        <end position="118"/>
    </location>
</feature>
<feature type="helix" evidence="7">
    <location>
        <begin position="123"/>
        <end position="131"/>
    </location>
</feature>
<feature type="helix" evidence="7">
    <location>
        <begin position="136"/>
        <end position="142"/>
    </location>
</feature>
<feature type="helix" evidence="7">
    <location>
        <begin position="146"/>
        <end position="154"/>
    </location>
</feature>
<feature type="strand" evidence="7">
    <location>
        <begin position="156"/>
        <end position="160"/>
    </location>
</feature>
<feature type="strand" evidence="7">
    <location>
        <begin position="165"/>
        <end position="170"/>
    </location>
</feature>
<feature type="helix" evidence="7">
    <location>
        <begin position="172"/>
        <end position="183"/>
    </location>
</feature>
<feature type="helix" evidence="7">
    <location>
        <begin position="191"/>
        <end position="201"/>
    </location>
</feature>
<feature type="strand" evidence="7">
    <location>
        <begin position="202"/>
        <end position="207"/>
    </location>
</feature>
<feature type="helix" evidence="7">
    <location>
        <begin position="208"/>
        <end position="212"/>
    </location>
</feature>
<feature type="turn" evidence="7">
    <location>
        <begin position="213"/>
        <end position="216"/>
    </location>
</feature>
<feature type="helix" evidence="7">
    <location>
        <begin position="222"/>
        <end position="228"/>
    </location>
</feature>
<feature type="helix" evidence="7">
    <location>
        <begin position="240"/>
        <end position="259"/>
    </location>
</feature>
<feature type="helix" evidence="7">
    <location>
        <begin position="265"/>
        <end position="267"/>
    </location>
</feature>
<dbReference type="EC" id="3.1.13.4"/>
<dbReference type="EMBL" id="CU329672">
    <property type="protein sequence ID" value="CAA21420.2"/>
    <property type="molecule type" value="Genomic_DNA"/>
</dbReference>
<dbReference type="PIR" id="T41149">
    <property type="entry name" value="T41149"/>
</dbReference>
<dbReference type="RefSeq" id="NP_588385.2">
    <property type="nucleotide sequence ID" value="NM_001023376.2"/>
</dbReference>
<dbReference type="PDB" id="2P51">
    <property type="method" value="X-ray"/>
    <property type="resolution" value="1.40 A"/>
    <property type="chains" value="A=4-335"/>
</dbReference>
<dbReference type="PDB" id="3G0Z">
    <property type="method" value="X-ray"/>
    <property type="resolution" value="2.00 A"/>
    <property type="chains" value="A=4-335"/>
</dbReference>
<dbReference type="PDB" id="3G10">
    <property type="method" value="X-ray"/>
    <property type="resolution" value="2.60 A"/>
    <property type="chains" value="A=4-335"/>
</dbReference>
<dbReference type="PDBsum" id="2P51"/>
<dbReference type="PDBsum" id="3G0Z"/>
<dbReference type="PDBsum" id="3G10"/>
<dbReference type="SMR" id="O74856"/>
<dbReference type="BioGRID" id="275614">
    <property type="interactions" value="94"/>
</dbReference>
<dbReference type="ComplexPortal" id="CPX-25774">
    <property type="entry name" value="CCR4-NOT mRNA deadenylase complex"/>
</dbReference>
<dbReference type="FunCoup" id="O74856">
    <property type="interactions" value="735"/>
</dbReference>
<dbReference type="STRING" id="284812.O74856"/>
<dbReference type="iPTMnet" id="O74856"/>
<dbReference type="PaxDb" id="4896-SPCC18.06c.1"/>
<dbReference type="EnsemblFungi" id="SPCC18.06c.1">
    <property type="protein sequence ID" value="SPCC18.06c.1:pep"/>
    <property type="gene ID" value="SPCC18.06c"/>
</dbReference>
<dbReference type="GeneID" id="2539041"/>
<dbReference type="KEGG" id="spo:2539041"/>
<dbReference type="PomBase" id="SPCC18.06c">
    <property type="gene designation" value="caf1"/>
</dbReference>
<dbReference type="VEuPathDB" id="FungiDB:SPCC18.06c"/>
<dbReference type="eggNOG" id="KOG0304">
    <property type="taxonomic scope" value="Eukaryota"/>
</dbReference>
<dbReference type="HOGENOM" id="CLU_027974_0_1_1"/>
<dbReference type="InParanoid" id="O74856"/>
<dbReference type="OMA" id="IKFMMRA"/>
<dbReference type="BRENDA" id="3.1.13.4">
    <property type="organism ID" value="5613"/>
</dbReference>
<dbReference type="EvolutionaryTrace" id="O74856"/>
<dbReference type="PRO" id="PR:O74856"/>
<dbReference type="Proteomes" id="UP000002485">
    <property type="component" value="Chromosome III"/>
</dbReference>
<dbReference type="GO" id="GO:0030014">
    <property type="term" value="C:CCR4-NOT complex"/>
    <property type="evidence" value="ECO:0000314"/>
    <property type="project" value="PomBase"/>
</dbReference>
<dbReference type="GO" id="GO:0030015">
    <property type="term" value="C:CCR4-NOT core complex"/>
    <property type="evidence" value="ECO:0000314"/>
    <property type="project" value="PomBase"/>
</dbReference>
<dbReference type="GO" id="GO:0005829">
    <property type="term" value="C:cytosol"/>
    <property type="evidence" value="ECO:0007005"/>
    <property type="project" value="PomBase"/>
</dbReference>
<dbReference type="GO" id="GO:0005634">
    <property type="term" value="C:nucleus"/>
    <property type="evidence" value="ECO:0007005"/>
    <property type="project" value="PomBase"/>
</dbReference>
<dbReference type="GO" id="GO:0000932">
    <property type="term" value="C:P-body"/>
    <property type="evidence" value="ECO:0000318"/>
    <property type="project" value="GO_Central"/>
</dbReference>
<dbReference type="GO" id="GO:0003682">
    <property type="term" value="F:chromatin binding"/>
    <property type="evidence" value="ECO:0000269"/>
    <property type="project" value="PomBase"/>
</dbReference>
<dbReference type="GO" id="GO:0030145">
    <property type="term" value="F:manganese ion binding"/>
    <property type="evidence" value="ECO:0000269"/>
    <property type="project" value="PomBase"/>
</dbReference>
<dbReference type="GO" id="GO:0046872">
    <property type="term" value="F:metal ion binding"/>
    <property type="evidence" value="ECO:0000314"/>
    <property type="project" value="PomBase"/>
</dbReference>
<dbReference type="GO" id="GO:0003729">
    <property type="term" value="F:mRNA binding"/>
    <property type="evidence" value="ECO:0000250"/>
    <property type="project" value="PomBase"/>
</dbReference>
<dbReference type="GO" id="GO:0004535">
    <property type="term" value="F:poly(A)-specific ribonuclease activity"/>
    <property type="evidence" value="ECO:0000314"/>
    <property type="project" value="PomBase"/>
</dbReference>
<dbReference type="GO" id="GO:0004540">
    <property type="term" value="F:RNA nuclease activity"/>
    <property type="evidence" value="ECO:0000269"/>
    <property type="project" value="PomBase"/>
</dbReference>
<dbReference type="GO" id="GO:0008270">
    <property type="term" value="F:zinc ion binding"/>
    <property type="evidence" value="ECO:0000269"/>
    <property type="project" value="PomBase"/>
</dbReference>
<dbReference type="GO" id="GO:0000288">
    <property type="term" value="P:nuclear-transcribed mRNA catabolic process, deadenylation-dependent decay"/>
    <property type="evidence" value="ECO:0000318"/>
    <property type="project" value="GO_Central"/>
</dbReference>
<dbReference type="GO" id="GO:0000289">
    <property type="term" value="P:nuclear-transcribed mRNA poly(A) tail shortening"/>
    <property type="evidence" value="ECO:0000314"/>
    <property type="project" value="PomBase"/>
</dbReference>
<dbReference type="GO" id="GO:0031047">
    <property type="term" value="P:regulatory ncRNA-mediated gene silencing"/>
    <property type="evidence" value="ECO:0000269"/>
    <property type="project" value="PomBase"/>
</dbReference>
<dbReference type="FunFam" id="3.30.420.10:FF:000048">
    <property type="entry name" value="CCR4-associated factor 1, putative"/>
    <property type="match status" value="1"/>
</dbReference>
<dbReference type="Gene3D" id="3.30.420.10">
    <property type="entry name" value="Ribonuclease H-like superfamily/Ribonuclease H"/>
    <property type="match status" value="1"/>
</dbReference>
<dbReference type="InterPro" id="IPR039637">
    <property type="entry name" value="CNOT7/CNOT8/Pop2"/>
</dbReference>
<dbReference type="InterPro" id="IPR006941">
    <property type="entry name" value="RNase_CAF1"/>
</dbReference>
<dbReference type="InterPro" id="IPR012337">
    <property type="entry name" value="RNaseH-like_sf"/>
</dbReference>
<dbReference type="InterPro" id="IPR036397">
    <property type="entry name" value="RNaseH_sf"/>
</dbReference>
<dbReference type="PANTHER" id="PTHR10797">
    <property type="entry name" value="CCR4-NOT TRANSCRIPTION COMPLEX SUBUNIT"/>
    <property type="match status" value="1"/>
</dbReference>
<dbReference type="Pfam" id="PF04857">
    <property type="entry name" value="CAF1"/>
    <property type="match status" value="2"/>
</dbReference>
<dbReference type="SUPFAM" id="SSF53098">
    <property type="entry name" value="Ribonuclease H-like"/>
    <property type="match status" value="1"/>
</dbReference>
<accession>O74856</accession>
<comment type="function">
    <text evidence="3 5">Acts as the catalytic component of the CCR4-NOT core complex, which in the nucleus seems to be a general transcription factor, and in the cytoplasm the major mRNA deadenylase involved in mRNA turnover. In vivo and in vitro, caf1 has 3'-exoribonuclease activity with a preference for poly(A) RNAs.</text>
</comment>
<comment type="catalytic activity">
    <reaction>
        <text>Exonucleolytic cleavage of poly(A) to 5'-AMP.</text>
        <dbReference type="EC" id="3.1.13.4"/>
    </reaction>
</comment>
<comment type="cofactor">
    <cofactor evidence="5">
        <name>Mn(2+)</name>
        <dbReference type="ChEBI" id="CHEBI:29035"/>
    </cofactor>
    <text evidence="5">Binds 1 Mn(2+) ion per subunit.</text>
</comment>
<comment type="cofactor">
    <cofactor evidence="5">
        <name>Zn(2+)</name>
        <dbReference type="ChEBI" id="CHEBI:29105"/>
    </cofactor>
    <cofactor evidence="5">
        <name>Mg(2+)</name>
        <dbReference type="ChEBI" id="CHEBI:18420"/>
    </cofactor>
    <text evidence="5">Binds 1 Zn(2+) ion per subunit. At lower physiological Zn(2+) concentrations, Mg(2+) replaces Zn(2+). The nature of the bound ion affects the speed of the RNA degradation reaction and, to a limited extent, base selectivity.</text>
</comment>
<comment type="subcellular location">
    <subcellularLocation>
        <location evidence="2">Cytoplasm</location>
    </subcellularLocation>
    <subcellularLocation>
        <location evidence="2">Nucleus</location>
    </subcellularLocation>
</comment>
<comment type="similarity">
    <text evidence="6">Belongs to the CAF1 family.</text>
</comment>
<sequence length="335" mass="37533">MTAMNSNFSYPALGVDGISSQISPIRDVWSTNLQQEMNLIMSLIERYPVVSMDTEFPGVVARPLGVFKSSDDYHYQTLRANVDSLKIIQIGLALSDEEGNAPVEACTWQFNFTFNLQDDMYAPESIELLTKSGIDFKKHQEVGIEPADFAELLIGSGLVLQEEVTWITFHSGYDFAYLLKAMTQIPLPAEYEEFYKILCIYFPKNYDIKYIMKSVLNNSKGLQDIADDLQIHRIGPQHQAGSDALLTARIFFEIRSRYFDGSIDSRMLNQLYGLGSTGSVLWHNNSSTPQIQFRDLPGAHPSPTPSNAGIPTTLTNTSSAPNFANSTFRFPPRVV</sequence>
<protein>
    <recommendedName>
        <fullName>Poly(A) ribonuclease pop2</fullName>
        <ecNumber>3.1.13.4</ecNumber>
    </recommendedName>
    <alternativeName>
        <fullName>CCR4-associated factor 1</fullName>
    </alternativeName>
</protein>
<name>CAF1_SCHPO</name>
<keyword id="KW-0002">3D-structure</keyword>
<keyword id="KW-0010">Activator</keyword>
<keyword id="KW-0963">Cytoplasm</keyword>
<keyword id="KW-0269">Exonuclease</keyword>
<keyword id="KW-0378">Hydrolase</keyword>
<keyword id="KW-0460">Magnesium</keyword>
<keyword id="KW-0464">Manganese</keyword>
<keyword id="KW-0479">Metal-binding</keyword>
<keyword id="KW-0540">Nuclease</keyword>
<keyword id="KW-0539">Nucleus</keyword>
<keyword id="KW-0597">Phosphoprotein</keyword>
<keyword id="KW-1185">Reference proteome</keyword>
<keyword id="KW-0678">Repressor</keyword>
<keyword id="KW-0694">RNA-binding</keyword>
<keyword id="KW-0804">Transcription</keyword>
<keyword id="KW-0805">Transcription regulation</keyword>
<keyword id="KW-0862">Zinc</keyword>
<gene>
    <name type="primary">caf1</name>
    <name type="synonym">pop2</name>
    <name type="ORF">SPCC18.06c</name>
</gene>
<organism>
    <name type="scientific">Schizosaccharomyces pombe (strain 972 / ATCC 24843)</name>
    <name type="common">Fission yeast</name>
    <dbReference type="NCBI Taxonomy" id="284812"/>
    <lineage>
        <taxon>Eukaryota</taxon>
        <taxon>Fungi</taxon>
        <taxon>Dikarya</taxon>
        <taxon>Ascomycota</taxon>
        <taxon>Taphrinomycotina</taxon>
        <taxon>Schizosaccharomycetes</taxon>
        <taxon>Schizosaccharomycetales</taxon>
        <taxon>Schizosaccharomycetaceae</taxon>
        <taxon>Schizosaccharomyces</taxon>
    </lineage>
</organism>
<reference key="1">
    <citation type="journal article" date="2002" name="Nature">
        <title>The genome sequence of Schizosaccharomyces pombe.</title>
        <authorList>
            <person name="Wood V."/>
            <person name="Gwilliam R."/>
            <person name="Rajandream M.A."/>
            <person name="Lyne M.H."/>
            <person name="Lyne R."/>
            <person name="Stewart A."/>
            <person name="Sgouros J.G."/>
            <person name="Peat N."/>
            <person name="Hayles J."/>
            <person name="Baker S.G."/>
            <person name="Basham D."/>
            <person name="Bowman S."/>
            <person name="Brooks K."/>
            <person name="Brown D."/>
            <person name="Brown S."/>
            <person name="Chillingworth T."/>
            <person name="Churcher C.M."/>
            <person name="Collins M."/>
            <person name="Connor R."/>
            <person name="Cronin A."/>
            <person name="Davis P."/>
            <person name="Feltwell T."/>
            <person name="Fraser A."/>
            <person name="Gentles S."/>
            <person name="Goble A."/>
            <person name="Hamlin N."/>
            <person name="Harris D.E."/>
            <person name="Hidalgo J."/>
            <person name="Hodgson G."/>
            <person name="Holroyd S."/>
            <person name="Hornsby T."/>
            <person name="Howarth S."/>
            <person name="Huckle E.J."/>
            <person name="Hunt S."/>
            <person name="Jagels K."/>
            <person name="James K.D."/>
            <person name="Jones L."/>
            <person name="Jones M."/>
            <person name="Leather S."/>
            <person name="McDonald S."/>
            <person name="McLean J."/>
            <person name="Mooney P."/>
            <person name="Moule S."/>
            <person name="Mungall K.L."/>
            <person name="Murphy L.D."/>
            <person name="Niblett D."/>
            <person name="Odell C."/>
            <person name="Oliver K."/>
            <person name="O'Neil S."/>
            <person name="Pearson D."/>
            <person name="Quail M.A."/>
            <person name="Rabbinowitsch E."/>
            <person name="Rutherford K.M."/>
            <person name="Rutter S."/>
            <person name="Saunders D."/>
            <person name="Seeger K."/>
            <person name="Sharp S."/>
            <person name="Skelton J."/>
            <person name="Simmonds M.N."/>
            <person name="Squares R."/>
            <person name="Squares S."/>
            <person name="Stevens K."/>
            <person name="Taylor K."/>
            <person name="Taylor R.G."/>
            <person name="Tivey A."/>
            <person name="Walsh S.V."/>
            <person name="Warren T."/>
            <person name="Whitehead S."/>
            <person name="Woodward J.R."/>
            <person name="Volckaert G."/>
            <person name="Aert R."/>
            <person name="Robben J."/>
            <person name="Grymonprez B."/>
            <person name="Weltjens I."/>
            <person name="Vanstreels E."/>
            <person name="Rieger M."/>
            <person name="Schaefer M."/>
            <person name="Mueller-Auer S."/>
            <person name="Gabel C."/>
            <person name="Fuchs M."/>
            <person name="Duesterhoeft A."/>
            <person name="Fritzc C."/>
            <person name="Holzer E."/>
            <person name="Moestl D."/>
            <person name="Hilbert H."/>
            <person name="Borzym K."/>
            <person name="Langer I."/>
            <person name="Beck A."/>
            <person name="Lehrach H."/>
            <person name="Reinhardt R."/>
            <person name="Pohl T.M."/>
            <person name="Eger P."/>
            <person name="Zimmermann W."/>
            <person name="Wedler H."/>
            <person name="Wambutt R."/>
            <person name="Purnelle B."/>
            <person name="Goffeau A."/>
            <person name="Cadieu E."/>
            <person name="Dreano S."/>
            <person name="Gloux S."/>
            <person name="Lelaure V."/>
            <person name="Mottier S."/>
            <person name="Galibert F."/>
            <person name="Aves S.J."/>
            <person name="Xiang Z."/>
            <person name="Hunt C."/>
            <person name="Moore K."/>
            <person name="Hurst S.M."/>
            <person name="Lucas M."/>
            <person name="Rochet M."/>
            <person name="Gaillardin C."/>
            <person name="Tallada V.A."/>
            <person name="Garzon A."/>
            <person name="Thode G."/>
            <person name="Daga R.R."/>
            <person name="Cruzado L."/>
            <person name="Jimenez J."/>
            <person name="Sanchez M."/>
            <person name="del Rey F."/>
            <person name="Benito J."/>
            <person name="Dominguez A."/>
            <person name="Revuelta J.L."/>
            <person name="Moreno S."/>
            <person name="Armstrong J."/>
            <person name="Forsburg S.L."/>
            <person name="Cerutti L."/>
            <person name="Lowe T."/>
            <person name="McCombie W.R."/>
            <person name="Paulsen I."/>
            <person name="Potashkin J."/>
            <person name="Shpakovski G.V."/>
            <person name="Ussery D."/>
            <person name="Barrell B.G."/>
            <person name="Nurse P."/>
        </authorList>
    </citation>
    <scope>NUCLEOTIDE SEQUENCE [LARGE SCALE GENOMIC DNA]</scope>
    <source>
        <strain>972 / ATCC 24843</strain>
    </source>
</reference>
<reference key="2">
    <citation type="journal article" date="2011" name="Science">
        <title>Comparative functional genomics of the fission yeasts.</title>
        <authorList>
            <person name="Rhind N."/>
            <person name="Chen Z."/>
            <person name="Yassour M."/>
            <person name="Thompson D.A."/>
            <person name="Haas B.J."/>
            <person name="Habib N."/>
            <person name="Wapinski I."/>
            <person name="Roy S."/>
            <person name="Lin M.F."/>
            <person name="Heiman D.I."/>
            <person name="Young S.K."/>
            <person name="Furuya K."/>
            <person name="Guo Y."/>
            <person name="Pidoux A."/>
            <person name="Chen H.M."/>
            <person name="Robbertse B."/>
            <person name="Goldberg J.M."/>
            <person name="Aoki K."/>
            <person name="Bayne E.H."/>
            <person name="Berlin A.M."/>
            <person name="Desjardins C.A."/>
            <person name="Dobbs E."/>
            <person name="Dukaj L."/>
            <person name="Fan L."/>
            <person name="FitzGerald M.G."/>
            <person name="French C."/>
            <person name="Gujja S."/>
            <person name="Hansen K."/>
            <person name="Keifenheim D."/>
            <person name="Levin J.Z."/>
            <person name="Mosher R.A."/>
            <person name="Mueller C.A."/>
            <person name="Pfiffner J."/>
            <person name="Priest M."/>
            <person name="Russ C."/>
            <person name="Smialowska A."/>
            <person name="Swoboda P."/>
            <person name="Sykes S.M."/>
            <person name="Vaughn M."/>
            <person name="Vengrova S."/>
            <person name="Yoder R."/>
            <person name="Zeng Q."/>
            <person name="Allshire R."/>
            <person name="Baulcombe D."/>
            <person name="Birren B.W."/>
            <person name="Brown W."/>
            <person name="Ekwall K."/>
            <person name="Kellis M."/>
            <person name="Leatherwood J."/>
            <person name="Levin H."/>
            <person name="Margalit H."/>
            <person name="Martienssen R."/>
            <person name="Nieduszynski C.A."/>
            <person name="Spatafora J.W."/>
            <person name="Friedman N."/>
            <person name="Dalgaard J.Z."/>
            <person name="Baumann P."/>
            <person name="Niki H."/>
            <person name="Regev A."/>
            <person name="Nusbaum C."/>
        </authorList>
    </citation>
    <scope>REVISION OF GENE MODEL</scope>
</reference>
<reference key="3">
    <citation type="journal article" date="2006" name="Nat. Biotechnol.">
        <title>ORFeome cloning and global analysis of protein localization in the fission yeast Schizosaccharomyces pombe.</title>
        <authorList>
            <person name="Matsuyama A."/>
            <person name="Arai R."/>
            <person name="Yashiroda Y."/>
            <person name="Shirai A."/>
            <person name="Kamata A."/>
            <person name="Sekido S."/>
            <person name="Kobayashi Y."/>
            <person name="Hashimoto A."/>
            <person name="Hamamoto M."/>
            <person name="Hiraoka Y."/>
            <person name="Horinouchi S."/>
            <person name="Yoshida M."/>
        </authorList>
    </citation>
    <scope>SUBCELLULAR LOCATION [LARGE SCALE ANALYSIS]</scope>
</reference>
<reference key="4">
    <citation type="journal article" date="2008" name="J. Proteome Res.">
        <title>Phosphoproteome analysis of fission yeast.</title>
        <authorList>
            <person name="Wilson-Grady J.T."/>
            <person name="Villen J."/>
            <person name="Gygi S.P."/>
        </authorList>
    </citation>
    <scope>PHOSPHORYLATION [LARGE SCALE ANALYSIS] AT SER-302; THR-304 AND SER-306</scope>
    <scope>IDENTIFICATION BY MASS SPECTROMETRY</scope>
</reference>
<reference key="5">
    <citation type="journal article" date="2007" name="Nucleic Acids Res.">
        <title>The 1.4-A crystal structure of the S. pombe Pop2p deadenylase subunit unveils the configuration of an active enzyme.</title>
        <authorList>
            <person name="Jonstrup A.T."/>
            <person name="Andersen K.R."/>
            <person name="Van L.B."/>
            <person name="Brodersen D.E."/>
        </authorList>
    </citation>
    <scope>X-RAY CRYSTALLOGRAPHY (1.4 ANGSTROMS) OF 20-274 IN COMPLEX WITH MAGNESIUM IONS</scope>
    <scope>FUNCTION IN MRNA DEADENYLATION</scope>
    <scope>MUTAGENESIS OF ASP-53</scope>
</reference>
<reference key="6">
    <citation type="journal article" date="2009" name="RNA">
        <title>The activity and selectivity of fission yeast Pop2p are affected by a high affinity for Zn2+ and Mn2+ in the active site.</title>
        <authorList>
            <person name="Andersen K.R."/>
            <person name="Jonstrup A.T."/>
            <person name="Van L.B."/>
            <person name="Brodersen D.E."/>
        </authorList>
    </citation>
    <scope>X-RAY CRYSTALLOGRAPHY (2.0 ANGSTROMS) OF 23-274 IN COMPLEX WITH ZINC AND MANGANESE IONS</scope>
    <scope>FUNCTION IN MRNA DEADENYLATION</scope>
    <scope>COFACTOR</scope>
</reference>
<proteinExistence type="evidence at protein level"/>
<evidence type="ECO:0000256" key="1">
    <source>
        <dbReference type="SAM" id="MobiDB-lite"/>
    </source>
</evidence>
<evidence type="ECO:0000269" key="2">
    <source>
    </source>
</evidence>
<evidence type="ECO:0000269" key="3">
    <source>
    </source>
</evidence>
<evidence type="ECO:0000269" key="4">
    <source>
    </source>
</evidence>
<evidence type="ECO:0000269" key="5">
    <source>
    </source>
</evidence>
<evidence type="ECO:0000305" key="6"/>
<evidence type="ECO:0007829" key="7">
    <source>
        <dbReference type="PDB" id="2P51"/>
    </source>
</evidence>